<evidence type="ECO:0000255" key="1">
    <source>
        <dbReference type="HAMAP-Rule" id="MF_01800"/>
    </source>
</evidence>
<sequence>MIERGKFRSLTLVNWNGFFARTFDLDELVTTLSGGNGAGKSTTMAAFVTALIPDLTLLHFRNTTEAGATSGSRDKGLHGKLRAGVCYSTLDVVNSRHQRVVVGVRLQQVAGRDRKVDIKPFTIQGLPTAIQPTEILTELVAERQARVLSLPELKERVEAMEGVQFKQFNSITDYHSLMFDLGVIPKRLRSSADRSKFYRLIEASLYGGISSAITRSLRDYLLPENSGVRKAFQDMEAALRENRMTLEAIRVTQSDRDLFKHLISEATSYVAADYMRHANERRIHLDSALVLRRDLFSSRKQLVTEQYRHVEMSRELAEQSGAESDLETDYQAASDHLNLVQTAMRQQEKIERYQSDLEELTYRLEEQSEVVSEASEQQADNEARAEAAELEVDELKSQLADYQQALDVQQTRAIQYQQALQALERARALCQLPELTADNAEEWLETFHAKEQEATESLLQLEQKLSVADAAHSQFEQAYQLVVNIAGEVSRSEAWQTARELLRDWPSQQHLAERVQPLRMRLSELEQRLRAQQDAERLLQEFCKRQGNAYQPEELEALQRELESQVEELSLSVSDAGERRMAMRQELEQLKLKIQELTARAPVWLAAQDALSQLSEQSGEALEDSRQVTEYMQQLLERERETTVERDEIAASKRAIEAQIERLSQPSGAEDARLIALAERFGGVLLSEIYDDVTIDDAPYFSALYGPSRHGIVVPDLSLVREHLQGLDDCPEDLYLIEGDPQSFDDSVFAVEEHEKAVVVKIADRQWRYSRYPEVPLFGRAARENRLETLYQERDRLAERYATLSFDVQKTQRTHQAFSRFIGSHLAVAFDADPEAEIRLLNTRRGEIERALNAHEDQNQQQRQQFDQAKEGISALNRLIPLVSLLLDETLTDRVEEITEELAEAQEAARYIQQHGVSLTKLEPLLSVLQSDPQQHEQLQESYVLAQNSQRLAKQQAFALTEVVQRRAHFSYTDSAGMLTENSDLNDKLRQRLEQAEAERTRAREQLRQYQSQFTQYSQVLASLKSSYDAKRDMLKELSQELVDIGVPADANAEARARARRDELHAALSTNRSRRNQLEKQLTFCEAEMDSLQKKLRKLERDYHQIREQVVNAKAGWCAVMRMVKDNGVERRLHRRELAYMDGDELRSMSDKALGALRLAVADNEHLRDVLRLSEDPKRPERKIQFYIAVYQHLRERIRQDIIRTDDPVEAIEQMEIELGRLTEELTAREQKLAISSKSVSNIIRKTIHREQNRIRMLNQGLQAVSFGQVKSVRLNVNVREAHATLLDVLSEQQEQHQDLFNSNRLTFSEALAKLYQRLNPQMDMGQRLPQTIGEELLDYRNYLELEVEVYRGADGWLRAESGALSTGEAIGTGMSILVMVVQSWEEESRRLRGKDISPCRLLFLDEAARLDAKSIATLFELCERLEMQLIIAAPENISPEKGTTYKLVRKVFQNHEHVHVVGLRGFANEMPSLPPIAAELQQGG</sequence>
<reference key="1">
    <citation type="journal article" date="2006" name="J. Bacteriol.">
        <title>Complete genome sequence of Yersinia pestis strains Antiqua and Nepal516: evidence of gene reduction in an emerging pathogen.</title>
        <authorList>
            <person name="Chain P.S.G."/>
            <person name="Hu P."/>
            <person name="Malfatti S.A."/>
            <person name="Radnedge L."/>
            <person name="Larimer F."/>
            <person name="Vergez L.M."/>
            <person name="Worsham P."/>
            <person name="Chu M.C."/>
            <person name="Andersen G.L."/>
        </authorList>
    </citation>
    <scope>NUCLEOTIDE SEQUENCE [LARGE SCALE GENOMIC DNA]</scope>
    <source>
        <strain>Antiqua</strain>
    </source>
</reference>
<name>MUKB_YERPA</name>
<organism>
    <name type="scientific">Yersinia pestis bv. Antiqua (strain Antiqua)</name>
    <dbReference type="NCBI Taxonomy" id="360102"/>
    <lineage>
        <taxon>Bacteria</taxon>
        <taxon>Pseudomonadati</taxon>
        <taxon>Pseudomonadota</taxon>
        <taxon>Gammaproteobacteria</taxon>
        <taxon>Enterobacterales</taxon>
        <taxon>Yersiniaceae</taxon>
        <taxon>Yersinia</taxon>
    </lineage>
</organism>
<dbReference type="EMBL" id="CP000308">
    <property type="protein sequence ID" value="ABG12667.1"/>
    <property type="molecule type" value="Genomic_DNA"/>
</dbReference>
<dbReference type="RefSeq" id="WP_002211308.1">
    <property type="nucleotide sequence ID" value="NZ_CP009906.1"/>
</dbReference>
<dbReference type="SMR" id="Q1CA55"/>
<dbReference type="GeneID" id="57977201"/>
<dbReference type="KEGG" id="ypa:YPA_0699"/>
<dbReference type="Proteomes" id="UP000001971">
    <property type="component" value="Chromosome"/>
</dbReference>
<dbReference type="GO" id="GO:0005737">
    <property type="term" value="C:cytoplasm"/>
    <property type="evidence" value="ECO:0007669"/>
    <property type="project" value="UniProtKB-UniRule"/>
</dbReference>
<dbReference type="GO" id="GO:0009295">
    <property type="term" value="C:nucleoid"/>
    <property type="evidence" value="ECO:0007669"/>
    <property type="project" value="UniProtKB-SubCell"/>
</dbReference>
<dbReference type="GO" id="GO:0005524">
    <property type="term" value="F:ATP binding"/>
    <property type="evidence" value="ECO:0007669"/>
    <property type="project" value="UniProtKB-UniRule"/>
</dbReference>
<dbReference type="GO" id="GO:0003677">
    <property type="term" value="F:DNA binding"/>
    <property type="evidence" value="ECO:0007669"/>
    <property type="project" value="UniProtKB-UniRule"/>
</dbReference>
<dbReference type="GO" id="GO:0051301">
    <property type="term" value="P:cell division"/>
    <property type="evidence" value="ECO:0007669"/>
    <property type="project" value="UniProtKB-KW"/>
</dbReference>
<dbReference type="GO" id="GO:0030261">
    <property type="term" value="P:chromosome condensation"/>
    <property type="evidence" value="ECO:0007669"/>
    <property type="project" value="UniProtKB-KW"/>
</dbReference>
<dbReference type="GO" id="GO:0007059">
    <property type="term" value="P:chromosome segregation"/>
    <property type="evidence" value="ECO:0007669"/>
    <property type="project" value="UniProtKB-UniRule"/>
</dbReference>
<dbReference type="GO" id="GO:0006260">
    <property type="term" value="P:DNA replication"/>
    <property type="evidence" value="ECO:0007669"/>
    <property type="project" value="UniProtKB-UniRule"/>
</dbReference>
<dbReference type="FunFam" id="3.30.70.3500:FF:000001">
    <property type="entry name" value="Chromosome partition protein MukB"/>
    <property type="match status" value="1"/>
</dbReference>
<dbReference type="FunFam" id="3.40.1140.10:FF:000001">
    <property type="entry name" value="Chromosome partition protein MukB"/>
    <property type="match status" value="1"/>
</dbReference>
<dbReference type="FunFam" id="3.40.1140.10:FF:000002">
    <property type="entry name" value="Chromosome partition protein MukB"/>
    <property type="match status" value="1"/>
</dbReference>
<dbReference type="Gene3D" id="1.10.287.1490">
    <property type="match status" value="1"/>
</dbReference>
<dbReference type="Gene3D" id="1.20.58.850">
    <property type="match status" value="1"/>
</dbReference>
<dbReference type="Gene3D" id="3.40.1140.10">
    <property type="match status" value="2"/>
</dbReference>
<dbReference type="Gene3D" id="1.20.5.420">
    <property type="entry name" value="Immunoglobulin FC, subunit C"/>
    <property type="match status" value="1"/>
</dbReference>
<dbReference type="Gene3D" id="3.30.70.3500">
    <property type="entry name" value="MukB, hinge domain"/>
    <property type="match status" value="1"/>
</dbReference>
<dbReference type="HAMAP" id="MF_01800">
    <property type="entry name" value="MukB"/>
    <property type="match status" value="1"/>
</dbReference>
<dbReference type="InterPro" id="IPR012090">
    <property type="entry name" value="MukB"/>
</dbReference>
<dbReference type="InterPro" id="IPR050308">
    <property type="entry name" value="MukB/SMC"/>
</dbReference>
<dbReference type="InterPro" id="IPR032520">
    <property type="entry name" value="MukB_hinge"/>
</dbReference>
<dbReference type="InterPro" id="IPR042501">
    <property type="entry name" value="MukB_hinge_sf"/>
</dbReference>
<dbReference type="InterPro" id="IPR007406">
    <property type="entry name" value="MukB_N_dom"/>
</dbReference>
<dbReference type="InterPro" id="IPR027417">
    <property type="entry name" value="P-loop_NTPase"/>
</dbReference>
<dbReference type="NCBIfam" id="NF003422">
    <property type="entry name" value="PRK04863.1"/>
    <property type="match status" value="1"/>
</dbReference>
<dbReference type="PANTHER" id="PTHR42963">
    <property type="entry name" value="CHROMOSOME PARTITION PROTEIN MUKB"/>
    <property type="match status" value="1"/>
</dbReference>
<dbReference type="PANTHER" id="PTHR42963:SF1">
    <property type="entry name" value="DUF4476 DOMAIN-CONTAINING PROTEIN"/>
    <property type="match status" value="1"/>
</dbReference>
<dbReference type="Pfam" id="PF04310">
    <property type="entry name" value="MukB"/>
    <property type="match status" value="1"/>
</dbReference>
<dbReference type="Pfam" id="PF16330">
    <property type="entry name" value="MukB_hinge"/>
    <property type="match status" value="1"/>
</dbReference>
<dbReference type="Pfam" id="PF13558">
    <property type="entry name" value="SbcC_Walker_B"/>
    <property type="match status" value="1"/>
</dbReference>
<dbReference type="PIRSF" id="PIRSF005246">
    <property type="entry name" value="MukB"/>
    <property type="match status" value="1"/>
</dbReference>
<dbReference type="SUPFAM" id="SSF52540">
    <property type="entry name" value="P-loop containing nucleoside triphosphate hydrolases"/>
    <property type="match status" value="2"/>
</dbReference>
<keyword id="KW-0067">ATP-binding</keyword>
<keyword id="KW-0131">Cell cycle</keyword>
<keyword id="KW-0132">Cell division</keyword>
<keyword id="KW-0159">Chromosome partition</keyword>
<keyword id="KW-0175">Coiled coil</keyword>
<keyword id="KW-0963">Cytoplasm</keyword>
<keyword id="KW-0226">DNA condensation</keyword>
<keyword id="KW-0238">DNA-binding</keyword>
<keyword id="KW-0547">Nucleotide-binding</keyword>
<comment type="function">
    <text evidence="1">Plays a central role in chromosome condensation, segregation and cell cycle progression. Functions as a homodimer, which is essential for chromosome partition. Involved in negative DNA supercoiling in vivo, and by this means organize and compact chromosomes. May achieve or facilitate chromosome segregation by condensation DNA from both sides of a centrally located replisome during cell division.</text>
</comment>
<comment type="subunit">
    <text evidence="1">Homodimerization via its hinge domain. Binds to DNA via its C-terminal region. Interacts, and probably forms a ternary complex, with MukE and MukF via its C-terminal region. The complex formation is stimulated by calcium or magnesium. Interacts with tubulin-related protein FtsZ.</text>
</comment>
<comment type="subcellular location">
    <subcellularLocation>
        <location evidence="1">Cytoplasm</location>
        <location evidence="1">Nucleoid</location>
    </subcellularLocation>
    <text evidence="1">Restricted to the nucleoid region.</text>
</comment>
<comment type="domain">
    <text evidence="1">The hinge domain, which separates the large intramolecular coiled coil regions, allows the homodimerization, forming a V-shaped homodimer.</text>
</comment>
<comment type="similarity">
    <text evidence="1">Belongs to the SMC family. MukB subfamily.</text>
</comment>
<protein>
    <recommendedName>
        <fullName evidence="1">Chromosome partition protein MukB</fullName>
    </recommendedName>
    <alternativeName>
        <fullName evidence="1">Structural maintenance of chromosome-related protein</fullName>
    </alternativeName>
</protein>
<accession>Q1CA55</accession>
<proteinExistence type="inferred from homology"/>
<feature type="chain" id="PRO_1000069919" description="Chromosome partition protein MukB">
    <location>
        <begin position="1"/>
        <end position="1485"/>
    </location>
</feature>
<feature type="region of interest" description="Flexible hinge" evidence="1">
    <location>
        <begin position="666"/>
        <end position="783"/>
    </location>
</feature>
<feature type="coiled-coil region" evidence="1">
    <location>
        <begin position="337"/>
        <end position="480"/>
    </location>
</feature>
<feature type="coiled-coil region" evidence="1">
    <location>
        <begin position="509"/>
        <end position="605"/>
    </location>
</feature>
<feature type="coiled-coil region" evidence="1">
    <location>
        <begin position="780"/>
        <end position="805"/>
    </location>
</feature>
<feature type="coiled-coil region" evidence="1">
    <location>
        <begin position="835"/>
        <end position="915"/>
    </location>
</feature>
<feature type="coiled-coil region" evidence="1">
    <location>
        <begin position="977"/>
        <end position="1116"/>
    </location>
</feature>
<feature type="coiled-coil region" evidence="1">
    <location>
        <begin position="1210"/>
        <end position="1235"/>
    </location>
</feature>
<feature type="binding site" evidence="1">
    <location>
        <begin position="34"/>
        <end position="41"/>
    </location>
    <ligand>
        <name>ATP</name>
        <dbReference type="ChEBI" id="CHEBI:30616"/>
    </ligand>
</feature>
<gene>
    <name evidence="1" type="primary">mukB</name>
    <name type="ordered locus">YPA_0699</name>
</gene>